<organism>
    <name type="scientific">Salmonella heidelberg (strain SL476)</name>
    <dbReference type="NCBI Taxonomy" id="454169"/>
    <lineage>
        <taxon>Bacteria</taxon>
        <taxon>Pseudomonadati</taxon>
        <taxon>Pseudomonadota</taxon>
        <taxon>Gammaproteobacteria</taxon>
        <taxon>Enterobacterales</taxon>
        <taxon>Enterobacteriaceae</taxon>
        <taxon>Salmonella</taxon>
    </lineage>
</organism>
<proteinExistence type="inferred from homology"/>
<protein>
    <recommendedName>
        <fullName evidence="1">GTP 3',8-cyclase</fullName>
        <ecNumber evidence="1">4.1.99.22</ecNumber>
    </recommendedName>
    <alternativeName>
        <fullName evidence="1">Molybdenum cofactor biosynthesis protein A</fullName>
    </alternativeName>
</protein>
<name>MOAA_SALHS</name>
<accession>B4TC55</accession>
<reference key="1">
    <citation type="journal article" date="2011" name="J. Bacteriol.">
        <title>Comparative genomics of 28 Salmonella enterica isolates: evidence for CRISPR-mediated adaptive sublineage evolution.</title>
        <authorList>
            <person name="Fricke W.F."/>
            <person name="Mammel M.K."/>
            <person name="McDermott P.F."/>
            <person name="Tartera C."/>
            <person name="White D.G."/>
            <person name="Leclerc J.E."/>
            <person name="Ravel J."/>
            <person name="Cebula T.A."/>
        </authorList>
    </citation>
    <scope>NUCLEOTIDE SEQUENCE [LARGE SCALE GENOMIC DNA]</scope>
    <source>
        <strain>SL476</strain>
    </source>
</reference>
<sequence length="329" mass="37002">MASQLTDAFARKFYYLRLSITDVCNFRCTYCLPDGYKPGGVTNNGFLTVDEIRRVTRAFASLGTEKVRLTGGEPSLRRDFTDIIAAVGENDAIRQIAVTTNGYRLARDAASWREAGLTGVNVSVDSLDARQFHAITGQDKFRQVMAGIDAAFDAGFKKVKVNTVLMRDVNHHQLDTFLAWIQPRPIQLRFIELMETGEGSDLFRKHHISGQVLRDELIKRGWIHQLRQRSDGPAQVFCHPDYVGEIGLIMPYEKDFCATCNRLRVSSVGKLHLCLFGDGGVSLRDLLQDDAQQYALEERISDALREKKQTHFLHQSNTGITQNLSYIGG</sequence>
<keyword id="KW-0004">4Fe-4S</keyword>
<keyword id="KW-0342">GTP-binding</keyword>
<keyword id="KW-0408">Iron</keyword>
<keyword id="KW-0411">Iron-sulfur</keyword>
<keyword id="KW-0456">Lyase</keyword>
<keyword id="KW-0479">Metal-binding</keyword>
<keyword id="KW-0501">Molybdenum cofactor biosynthesis</keyword>
<keyword id="KW-0547">Nucleotide-binding</keyword>
<keyword id="KW-0949">S-adenosyl-L-methionine</keyword>
<dbReference type="EC" id="4.1.99.22" evidence="1"/>
<dbReference type="EMBL" id="CP001120">
    <property type="protein sequence ID" value="ACF68210.1"/>
    <property type="molecule type" value="Genomic_DNA"/>
</dbReference>
<dbReference type="RefSeq" id="WP_000168187.1">
    <property type="nucleotide sequence ID" value="NC_011083.1"/>
</dbReference>
<dbReference type="SMR" id="B4TC55"/>
<dbReference type="KEGG" id="seh:SeHA_C0928"/>
<dbReference type="HOGENOM" id="CLU_009273_0_1_6"/>
<dbReference type="UniPathway" id="UPA00344"/>
<dbReference type="Proteomes" id="UP000001866">
    <property type="component" value="Chromosome"/>
</dbReference>
<dbReference type="GO" id="GO:0051539">
    <property type="term" value="F:4 iron, 4 sulfur cluster binding"/>
    <property type="evidence" value="ECO:0007669"/>
    <property type="project" value="UniProtKB-UniRule"/>
</dbReference>
<dbReference type="GO" id="GO:0061799">
    <property type="term" value="F:cyclic pyranopterin monophosphate synthase activity"/>
    <property type="evidence" value="ECO:0007669"/>
    <property type="project" value="TreeGrafter"/>
</dbReference>
<dbReference type="GO" id="GO:0061798">
    <property type="term" value="F:GTP 3',8'-cyclase activity"/>
    <property type="evidence" value="ECO:0007669"/>
    <property type="project" value="UniProtKB-UniRule"/>
</dbReference>
<dbReference type="GO" id="GO:0005525">
    <property type="term" value="F:GTP binding"/>
    <property type="evidence" value="ECO:0007669"/>
    <property type="project" value="UniProtKB-UniRule"/>
</dbReference>
<dbReference type="GO" id="GO:0046872">
    <property type="term" value="F:metal ion binding"/>
    <property type="evidence" value="ECO:0007669"/>
    <property type="project" value="UniProtKB-KW"/>
</dbReference>
<dbReference type="GO" id="GO:1904047">
    <property type="term" value="F:S-adenosyl-L-methionine binding"/>
    <property type="evidence" value="ECO:0007669"/>
    <property type="project" value="UniProtKB-UniRule"/>
</dbReference>
<dbReference type="GO" id="GO:0006777">
    <property type="term" value="P:Mo-molybdopterin cofactor biosynthetic process"/>
    <property type="evidence" value="ECO:0007669"/>
    <property type="project" value="UniProtKB-UniRule"/>
</dbReference>
<dbReference type="CDD" id="cd01335">
    <property type="entry name" value="Radical_SAM"/>
    <property type="match status" value="1"/>
</dbReference>
<dbReference type="CDD" id="cd21117">
    <property type="entry name" value="Twitch_MoaA"/>
    <property type="match status" value="1"/>
</dbReference>
<dbReference type="FunFam" id="3.20.20.70:FF:000057">
    <property type="entry name" value="GTP 3',8-cyclase"/>
    <property type="match status" value="1"/>
</dbReference>
<dbReference type="Gene3D" id="3.20.20.70">
    <property type="entry name" value="Aldolase class I"/>
    <property type="match status" value="1"/>
</dbReference>
<dbReference type="HAMAP" id="MF_01225_B">
    <property type="entry name" value="MoaA_B"/>
    <property type="match status" value="1"/>
</dbReference>
<dbReference type="InterPro" id="IPR013785">
    <property type="entry name" value="Aldolase_TIM"/>
</dbReference>
<dbReference type="InterPro" id="IPR006638">
    <property type="entry name" value="Elp3/MiaA/NifB-like_rSAM"/>
</dbReference>
<dbReference type="InterPro" id="IPR013483">
    <property type="entry name" value="MoaA"/>
</dbReference>
<dbReference type="InterPro" id="IPR000385">
    <property type="entry name" value="MoaA_NifB_PqqE_Fe-S-bd_CS"/>
</dbReference>
<dbReference type="InterPro" id="IPR010505">
    <property type="entry name" value="MoaA_twitch"/>
</dbReference>
<dbReference type="InterPro" id="IPR050105">
    <property type="entry name" value="MoCo_biosynth_MoaA/MoaC"/>
</dbReference>
<dbReference type="InterPro" id="IPR007197">
    <property type="entry name" value="rSAM"/>
</dbReference>
<dbReference type="NCBIfam" id="TIGR02666">
    <property type="entry name" value="moaA"/>
    <property type="match status" value="1"/>
</dbReference>
<dbReference type="PANTHER" id="PTHR22960:SF28">
    <property type="entry name" value="GTP 3',8-CYCLASE"/>
    <property type="match status" value="1"/>
</dbReference>
<dbReference type="PANTHER" id="PTHR22960">
    <property type="entry name" value="MOLYBDOPTERIN COFACTOR SYNTHESIS PROTEIN A"/>
    <property type="match status" value="1"/>
</dbReference>
<dbReference type="Pfam" id="PF06463">
    <property type="entry name" value="Mob_synth_C"/>
    <property type="match status" value="1"/>
</dbReference>
<dbReference type="Pfam" id="PF04055">
    <property type="entry name" value="Radical_SAM"/>
    <property type="match status" value="1"/>
</dbReference>
<dbReference type="SFLD" id="SFLDG01383">
    <property type="entry name" value="cyclic_pyranopterin_phosphate"/>
    <property type="match status" value="1"/>
</dbReference>
<dbReference type="SFLD" id="SFLDG01072">
    <property type="entry name" value="dehydrogenase_like"/>
    <property type="match status" value="1"/>
</dbReference>
<dbReference type="SMART" id="SM00729">
    <property type="entry name" value="Elp3"/>
    <property type="match status" value="1"/>
</dbReference>
<dbReference type="SUPFAM" id="SSF102114">
    <property type="entry name" value="Radical SAM enzymes"/>
    <property type="match status" value="1"/>
</dbReference>
<dbReference type="PROSITE" id="PS01305">
    <property type="entry name" value="MOAA_NIFB_PQQE"/>
    <property type="match status" value="1"/>
</dbReference>
<dbReference type="PROSITE" id="PS51918">
    <property type="entry name" value="RADICAL_SAM"/>
    <property type="match status" value="1"/>
</dbReference>
<feature type="chain" id="PRO_1000139343" description="GTP 3',8-cyclase">
    <location>
        <begin position="1"/>
        <end position="329"/>
    </location>
</feature>
<feature type="domain" description="Radical SAM core" evidence="2">
    <location>
        <begin position="8"/>
        <end position="234"/>
    </location>
</feature>
<feature type="binding site" evidence="1">
    <location>
        <position position="17"/>
    </location>
    <ligand>
        <name>GTP</name>
        <dbReference type="ChEBI" id="CHEBI:37565"/>
    </ligand>
</feature>
<feature type="binding site" evidence="1">
    <location>
        <position position="24"/>
    </location>
    <ligand>
        <name>[4Fe-4S] cluster</name>
        <dbReference type="ChEBI" id="CHEBI:49883"/>
        <label>1</label>
        <note>4Fe-4S-S-AdoMet</note>
    </ligand>
</feature>
<feature type="binding site" evidence="1">
    <location>
        <position position="28"/>
    </location>
    <ligand>
        <name>[4Fe-4S] cluster</name>
        <dbReference type="ChEBI" id="CHEBI:49883"/>
        <label>1</label>
        <note>4Fe-4S-S-AdoMet</note>
    </ligand>
</feature>
<feature type="binding site" evidence="1">
    <location>
        <position position="30"/>
    </location>
    <ligand>
        <name>S-adenosyl-L-methionine</name>
        <dbReference type="ChEBI" id="CHEBI:59789"/>
    </ligand>
</feature>
<feature type="binding site" evidence="1">
    <location>
        <position position="31"/>
    </location>
    <ligand>
        <name>[4Fe-4S] cluster</name>
        <dbReference type="ChEBI" id="CHEBI:49883"/>
        <label>1</label>
        <note>4Fe-4S-S-AdoMet</note>
    </ligand>
</feature>
<feature type="binding site" evidence="1">
    <location>
        <position position="68"/>
    </location>
    <ligand>
        <name>GTP</name>
        <dbReference type="ChEBI" id="CHEBI:37565"/>
    </ligand>
</feature>
<feature type="binding site" evidence="1">
    <location>
        <position position="72"/>
    </location>
    <ligand>
        <name>S-adenosyl-L-methionine</name>
        <dbReference type="ChEBI" id="CHEBI:59789"/>
    </ligand>
</feature>
<feature type="binding site" evidence="1">
    <location>
        <position position="99"/>
    </location>
    <ligand>
        <name>GTP</name>
        <dbReference type="ChEBI" id="CHEBI:37565"/>
    </ligand>
</feature>
<feature type="binding site" evidence="1">
    <location>
        <position position="123"/>
    </location>
    <ligand>
        <name>S-adenosyl-L-methionine</name>
        <dbReference type="ChEBI" id="CHEBI:59789"/>
    </ligand>
</feature>
<feature type="binding site" evidence="1">
    <location>
        <position position="160"/>
    </location>
    <ligand>
        <name>GTP</name>
        <dbReference type="ChEBI" id="CHEBI:37565"/>
    </ligand>
</feature>
<feature type="binding site" evidence="1">
    <location>
        <position position="194"/>
    </location>
    <ligand>
        <name>S-adenosyl-L-methionine</name>
        <dbReference type="ChEBI" id="CHEBI:59789"/>
    </ligand>
</feature>
<feature type="binding site" evidence="1">
    <location>
        <position position="257"/>
    </location>
    <ligand>
        <name>[4Fe-4S] cluster</name>
        <dbReference type="ChEBI" id="CHEBI:49883"/>
        <label>2</label>
        <note>4Fe-4S-substrate</note>
    </ligand>
</feature>
<feature type="binding site" evidence="1">
    <location>
        <position position="260"/>
    </location>
    <ligand>
        <name>[4Fe-4S] cluster</name>
        <dbReference type="ChEBI" id="CHEBI:49883"/>
        <label>2</label>
        <note>4Fe-4S-substrate</note>
    </ligand>
</feature>
<feature type="binding site" evidence="1">
    <location>
        <begin position="262"/>
        <end position="264"/>
    </location>
    <ligand>
        <name>GTP</name>
        <dbReference type="ChEBI" id="CHEBI:37565"/>
    </ligand>
</feature>
<feature type="binding site" evidence="1">
    <location>
        <position position="274"/>
    </location>
    <ligand>
        <name>[4Fe-4S] cluster</name>
        <dbReference type="ChEBI" id="CHEBI:49883"/>
        <label>2</label>
        <note>4Fe-4S-substrate</note>
    </ligand>
</feature>
<comment type="function">
    <text evidence="1">Catalyzes the cyclization of GTP to (8S)-3',8-cyclo-7,8-dihydroguanosine 5'-triphosphate.</text>
</comment>
<comment type="catalytic activity">
    <reaction evidence="1">
        <text>GTP + AH2 + S-adenosyl-L-methionine = (8S)-3',8-cyclo-7,8-dihydroguanosine 5'-triphosphate + 5'-deoxyadenosine + L-methionine + A + H(+)</text>
        <dbReference type="Rhea" id="RHEA:49576"/>
        <dbReference type="ChEBI" id="CHEBI:13193"/>
        <dbReference type="ChEBI" id="CHEBI:15378"/>
        <dbReference type="ChEBI" id="CHEBI:17319"/>
        <dbReference type="ChEBI" id="CHEBI:17499"/>
        <dbReference type="ChEBI" id="CHEBI:37565"/>
        <dbReference type="ChEBI" id="CHEBI:57844"/>
        <dbReference type="ChEBI" id="CHEBI:59789"/>
        <dbReference type="ChEBI" id="CHEBI:131766"/>
        <dbReference type="EC" id="4.1.99.22"/>
    </reaction>
</comment>
<comment type="cofactor">
    <cofactor evidence="1">
        <name>[4Fe-4S] cluster</name>
        <dbReference type="ChEBI" id="CHEBI:49883"/>
    </cofactor>
    <text evidence="1">Binds 2 [4Fe-4S] clusters. Binds 1 [4Fe-4S] cluster coordinated with 3 cysteines and an exchangeable S-adenosyl-L-methionine and 1 [4Fe-4S] cluster coordinated with 3 cysteines and the GTP-derived substrate.</text>
</comment>
<comment type="pathway">
    <text evidence="1">Cofactor biosynthesis; molybdopterin biosynthesis.</text>
</comment>
<comment type="subunit">
    <text evidence="1">Monomer and homodimer.</text>
</comment>
<comment type="similarity">
    <text evidence="1">Belongs to the radical SAM superfamily. MoaA family.</text>
</comment>
<evidence type="ECO:0000255" key="1">
    <source>
        <dbReference type="HAMAP-Rule" id="MF_01225"/>
    </source>
</evidence>
<evidence type="ECO:0000255" key="2">
    <source>
        <dbReference type="PROSITE-ProRule" id="PRU01266"/>
    </source>
</evidence>
<gene>
    <name evidence="1" type="primary">moaA</name>
    <name type="ordered locus">SeHA_C0928</name>
</gene>